<protein>
    <recommendedName>
        <fullName evidence="1">Exodeoxyribonuclease 7 small subunit</fullName>
        <ecNumber evidence="1">3.1.11.6</ecNumber>
    </recommendedName>
    <alternativeName>
        <fullName evidence="1">Exodeoxyribonuclease VII small subunit</fullName>
        <shortName evidence="1">Exonuclease VII small subunit</shortName>
    </alternativeName>
</protein>
<keyword id="KW-0963">Cytoplasm</keyword>
<keyword id="KW-0269">Exonuclease</keyword>
<keyword id="KW-0378">Hydrolase</keyword>
<keyword id="KW-0540">Nuclease</keyword>
<name>EX7S_SINMW</name>
<accession>A6U6S1</accession>
<comment type="function">
    <text evidence="1">Bidirectionally degrades single-stranded DNA into large acid-insoluble oligonucleotides, which are then degraded further into small acid-soluble oligonucleotides.</text>
</comment>
<comment type="catalytic activity">
    <reaction evidence="1">
        <text>Exonucleolytic cleavage in either 5'- to 3'- or 3'- to 5'-direction to yield nucleoside 5'-phosphates.</text>
        <dbReference type="EC" id="3.1.11.6"/>
    </reaction>
</comment>
<comment type="subunit">
    <text evidence="1">Heterooligomer composed of large and small subunits.</text>
</comment>
<comment type="subcellular location">
    <subcellularLocation>
        <location evidence="1">Cytoplasm</location>
    </subcellularLocation>
</comment>
<comment type="similarity">
    <text evidence="1">Belongs to the XseB family.</text>
</comment>
<organism>
    <name type="scientific">Sinorhizobium medicae (strain WSM419)</name>
    <name type="common">Ensifer medicae</name>
    <dbReference type="NCBI Taxonomy" id="366394"/>
    <lineage>
        <taxon>Bacteria</taxon>
        <taxon>Pseudomonadati</taxon>
        <taxon>Pseudomonadota</taxon>
        <taxon>Alphaproteobacteria</taxon>
        <taxon>Hyphomicrobiales</taxon>
        <taxon>Rhizobiaceae</taxon>
        <taxon>Sinorhizobium/Ensifer group</taxon>
        <taxon>Sinorhizobium</taxon>
    </lineage>
</organism>
<dbReference type="EC" id="3.1.11.6" evidence="1"/>
<dbReference type="EMBL" id="CP000738">
    <property type="protein sequence ID" value="ABR59351.1"/>
    <property type="molecule type" value="Genomic_DNA"/>
</dbReference>
<dbReference type="RefSeq" id="WP_011974697.1">
    <property type="nucleotide sequence ID" value="NC_009636.1"/>
</dbReference>
<dbReference type="RefSeq" id="YP_001326186.1">
    <property type="nucleotide sequence ID" value="NC_009636.1"/>
</dbReference>
<dbReference type="SMR" id="A6U6S1"/>
<dbReference type="STRING" id="366394.Smed_0495"/>
<dbReference type="KEGG" id="smd:Smed_0495"/>
<dbReference type="PATRIC" id="fig|366394.8.peg.3581"/>
<dbReference type="eggNOG" id="COG1722">
    <property type="taxonomic scope" value="Bacteria"/>
</dbReference>
<dbReference type="HOGENOM" id="CLU_145918_0_3_5"/>
<dbReference type="OrthoDB" id="9808145at2"/>
<dbReference type="Proteomes" id="UP000001108">
    <property type="component" value="Chromosome"/>
</dbReference>
<dbReference type="GO" id="GO:0005829">
    <property type="term" value="C:cytosol"/>
    <property type="evidence" value="ECO:0007669"/>
    <property type="project" value="TreeGrafter"/>
</dbReference>
<dbReference type="GO" id="GO:0009318">
    <property type="term" value="C:exodeoxyribonuclease VII complex"/>
    <property type="evidence" value="ECO:0007669"/>
    <property type="project" value="InterPro"/>
</dbReference>
<dbReference type="GO" id="GO:0008855">
    <property type="term" value="F:exodeoxyribonuclease VII activity"/>
    <property type="evidence" value="ECO:0007669"/>
    <property type="project" value="UniProtKB-UniRule"/>
</dbReference>
<dbReference type="GO" id="GO:0006308">
    <property type="term" value="P:DNA catabolic process"/>
    <property type="evidence" value="ECO:0007669"/>
    <property type="project" value="UniProtKB-UniRule"/>
</dbReference>
<dbReference type="Gene3D" id="1.10.287.1040">
    <property type="entry name" value="Exonuclease VII, small subunit"/>
    <property type="match status" value="1"/>
</dbReference>
<dbReference type="HAMAP" id="MF_00337">
    <property type="entry name" value="Exonuc_7_S"/>
    <property type="match status" value="1"/>
</dbReference>
<dbReference type="InterPro" id="IPR003761">
    <property type="entry name" value="Exonuc_VII_S"/>
</dbReference>
<dbReference type="InterPro" id="IPR037004">
    <property type="entry name" value="Exonuc_VII_ssu_sf"/>
</dbReference>
<dbReference type="NCBIfam" id="NF002139">
    <property type="entry name" value="PRK00977.1-3"/>
    <property type="match status" value="1"/>
</dbReference>
<dbReference type="NCBIfam" id="TIGR01280">
    <property type="entry name" value="xseB"/>
    <property type="match status" value="1"/>
</dbReference>
<dbReference type="PANTHER" id="PTHR34137">
    <property type="entry name" value="EXODEOXYRIBONUCLEASE 7 SMALL SUBUNIT"/>
    <property type="match status" value="1"/>
</dbReference>
<dbReference type="PANTHER" id="PTHR34137:SF1">
    <property type="entry name" value="EXODEOXYRIBONUCLEASE 7 SMALL SUBUNIT"/>
    <property type="match status" value="1"/>
</dbReference>
<dbReference type="Pfam" id="PF02609">
    <property type="entry name" value="Exonuc_VII_S"/>
    <property type="match status" value="1"/>
</dbReference>
<dbReference type="PIRSF" id="PIRSF006488">
    <property type="entry name" value="Exonuc_VII_S"/>
    <property type="match status" value="1"/>
</dbReference>
<dbReference type="SUPFAM" id="SSF116842">
    <property type="entry name" value="XseB-like"/>
    <property type="match status" value="1"/>
</dbReference>
<sequence>MNNTAQQDVSALSFEQAVEELERIVSALERGDVALDKSIEIYERGEALKKHCEALLKAAEDRIEKIRLDRAGRPQGVEPLDAE</sequence>
<feature type="chain" id="PRO_1000019593" description="Exodeoxyribonuclease 7 small subunit">
    <location>
        <begin position="1"/>
        <end position="83"/>
    </location>
</feature>
<reference key="1">
    <citation type="submission" date="2007-06" db="EMBL/GenBank/DDBJ databases">
        <title>Complete sequence of Sinorhizobium medicae WSM419 chromosome.</title>
        <authorList>
            <consortium name="US DOE Joint Genome Institute"/>
            <person name="Copeland A."/>
            <person name="Lucas S."/>
            <person name="Lapidus A."/>
            <person name="Barry K."/>
            <person name="Glavina del Rio T."/>
            <person name="Dalin E."/>
            <person name="Tice H."/>
            <person name="Pitluck S."/>
            <person name="Chain P."/>
            <person name="Malfatti S."/>
            <person name="Shin M."/>
            <person name="Vergez L."/>
            <person name="Schmutz J."/>
            <person name="Larimer F."/>
            <person name="Land M."/>
            <person name="Hauser L."/>
            <person name="Kyrpides N."/>
            <person name="Mikhailova N."/>
            <person name="Reeve W.G."/>
            <person name="Richardson P."/>
        </authorList>
    </citation>
    <scope>NUCLEOTIDE SEQUENCE [LARGE SCALE GENOMIC DNA]</scope>
    <source>
        <strain>WSM419</strain>
    </source>
</reference>
<proteinExistence type="inferred from homology"/>
<evidence type="ECO:0000255" key="1">
    <source>
        <dbReference type="HAMAP-Rule" id="MF_00337"/>
    </source>
</evidence>
<gene>
    <name evidence="1" type="primary">xseB</name>
    <name type="ordered locus">Smed_0495</name>
</gene>